<feature type="chain" id="PRO_0000419549" description="Bifunctional nuclease 2">
    <location>
        <begin position="1"/>
        <end position="329"/>
    </location>
</feature>
<feature type="domain" description="BFN">
    <location>
        <begin position="121"/>
        <end position="256"/>
    </location>
</feature>
<feature type="domain" description="UVR">
    <location>
        <begin position="287"/>
        <end position="322"/>
    </location>
</feature>
<feature type="sequence conflict" description="In Ref. 5; AAM65561." evidence="2" ref="5">
    <original>K</original>
    <variation>N</variation>
    <location>
        <position position="37"/>
    </location>
</feature>
<feature type="sequence conflict" description="In Ref. 5; AAM65561." evidence="2" ref="5">
    <original>D</original>
    <variation>G</variation>
    <location>
        <position position="47"/>
    </location>
</feature>
<feature type="sequence conflict" description="In Ref. 5; AAM65561." evidence="2" ref="5">
    <original>I</original>
    <variation>T</variation>
    <location>
        <position position="66"/>
    </location>
</feature>
<feature type="sequence conflict" description="In Ref. 5; AAM65561." evidence="2" ref="5">
    <original>G</original>
    <variation>V</variation>
    <location>
        <position position="128"/>
    </location>
</feature>
<comment type="function">
    <text evidence="1">Bifunctional nuclease with both RNase and DNase activities. Involved in basal defense response. Participates in abscisic acid-derived callose deposition following infection by a necrotrophic pathogen (By similarity).</text>
</comment>
<comment type="subcellular location">
    <subcellularLocation>
        <location evidence="1">Nucleus</location>
    </subcellularLocation>
</comment>
<comment type="similarity">
    <text evidence="2">Belongs to the bifunctional nuclease family.</text>
</comment>
<comment type="sequence caution" evidence="2">
    <conflict type="erroneous gene model prediction">
        <sequence resource="EMBL-CDS" id="AAF98407"/>
    </conflict>
</comment>
<name>BBD2_ARATH</name>
<sequence length="329" mass="37052">MRSLQAPVVCPSVRPRQLGVSALLVNCSVSKTRSLRKQFWGNQTKNDKSQAATVNLRLHLRRYKSIKCLFSSHSDGTGSTAENFNENDEDYVKSSVLEAVEVKSGPDGFMVKMKDGRQLRCVHNNPQGGNLPNYAPHSAIVLKMEDGTGLLLPIIVLEMPSVLLMAAMTNVQIARPTMYQVVKDMVDKMGYEVRLVRVTTRVHEAYFAELYLSKVGDKSDCVSFDLRPSDAINIAVRCKVPIQVNKYLAYSDGMRVIDSGKLSKQTPASDGLLFTELDRPNGQPCFDTKEFDLVRNMMQAVDEERYDEAAEWRDKLGKFQAKRKLRKYT</sequence>
<evidence type="ECO:0000250" key="1"/>
<evidence type="ECO:0000305" key="2"/>
<accession>Q93VH2</accession>
<accession>Q8LA58</accession>
<accession>Q9FWS0</accession>
<gene>
    <name type="primary">BBD2</name>
    <name type="ordered locus">At1g19660</name>
    <name type="ORF">F14P1.1</name>
</gene>
<proteinExistence type="evidence at transcript level"/>
<reference key="1">
    <citation type="journal article" date="2000" name="Nature">
        <title>Sequence and analysis of chromosome 1 of the plant Arabidopsis thaliana.</title>
        <authorList>
            <person name="Theologis A."/>
            <person name="Ecker J.R."/>
            <person name="Palm C.J."/>
            <person name="Federspiel N.A."/>
            <person name="Kaul S."/>
            <person name="White O."/>
            <person name="Alonso J."/>
            <person name="Altafi H."/>
            <person name="Araujo R."/>
            <person name="Bowman C.L."/>
            <person name="Brooks S.Y."/>
            <person name="Buehler E."/>
            <person name="Chan A."/>
            <person name="Chao Q."/>
            <person name="Chen H."/>
            <person name="Cheuk R.F."/>
            <person name="Chin C.W."/>
            <person name="Chung M.K."/>
            <person name="Conn L."/>
            <person name="Conway A.B."/>
            <person name="Conway A.R."/>
            <person name="Creasy T.H."/>
            <person name="Dewar K."/>
            <person name="Dunn P."/>
            <person name="Etgu P."/>
            <person name="Feldblyum T.V."/>
            <person name="Feng J.-D."/>
            <person name="Fong B."/>
            <person name="Fujii C.Y."/>
            <person name="Gill J.E."/>
            <person name="Goldsmith A.D."/>
            <person name="Haas B."/>
            <person name="Hansen N.F."/>
            <person name="Hughes B."/>
            <person name="Huizar L."/>
            <person name="Hunter J.L."/>
            <person name="Jenkins J."/>
            <person name="Johnson-Hopson C."/>
            <person name="Khan S."/>
            <person name="Khaykin E."/>
            <person name="Kim C.J."/>
            <person name="Koo H.L."/>
            <person name="Kremenetskaia I."/>
            <person name="Kurtz D.B."/>
            <person name="Kwan A."/>
            <person name="Lam B."/>
            <person name="Langin-Hooper S."/>
            <person name="Lee A."/>
            <person name="Lee J.M."/>
            <person name="Lenz C.A."/>
            <person name="Li J.H."/>
            <person name="Li Y.-P."/>
            <person name="Lin X."/>
            <person name="Liu S.X."/>
            <person name="Liu Z.A."/>
            <person name="Luros J.S."/>
            <person name="Maiti R."/>
            <person name="Marziali A."/>
            <person name="Militscher J."/>
            <person name="Miranda M."/>
            <person name="Nguyen M."/>
            <person name="Nierman W.C."/>
            <person name="Osborne B.I."/>
            <person name="Pai G."/>
            <person name="Peterson J."/>
            <person name="Pham P.K."/>
            <person name="Rizzo M."/>
            <person name="Rooney T."/>
            <person name="Rowley D."/>
            <person name="Sakano H."/>
            <person name="Salzberg S.L."/>
            <person name="Schwartz J.R."/>
            <person name="Shinn P."/>
            <person name="Southwick A.M."/>
            <person name="Sun H."/>
            <person name="Tallon L.J."/>
            <person name="Tambunga G."/>
            <person name="Toriumi M.J."/>
            <person name="Town C.D."/>
            <person name="Utterback T."/>
            <person name="Van Aken S."/>
            <person name="Vaysberg M."/>
            <person name="Vysotskaia V.S."/>
            <person name="Walker M."/>
            <person name="Wu D."/>
            <person name="Yu G."/>
            <person name="Fraser C.M."/>
            <person name="Venter J.C."/>
            <person name="Davis R.W."/>
        </authorList>
    </citation>
    <scope>NUCLEOTIDE SEQUENCE [LARGE SCALE GENOMIC DNA]</scope>
    <source>
        <strain>cv. Columbia</strain>
    </source>
</reference>
<reference key="2">
    <citation type="journal article" date="2017" name="Plant J.">
        <title>Araport11: a complete reannotation of the Arabidopsis thaliana reference genome.</title>
        <authorList>
            <person name="Cheng C.Y."/>
            <person name="Krishnakumar V."/>
            <person name="Chan A.P."/>
            <person name="Thibaud-Nissen F."/>
            <person name="Schobel S."/>
            <person name="Town C.D."/>
        </authorList>
    </citation>
    <scope>GENOME REANNOTATION</scope>
    <source>
        <strain>cv. Columbia</strain>
    </source>
</reference>
<reference key="3">
    <citation type="journal article" date="2003" name="Science">
        <title>Empirical analysis of transcriptional activity in the Arabidopsis genome.</title>
        <authorList>
            <person name="Yamada K."/>
            <person name="Lim J."/>
            <person name="Dale J.M."/>
            <person name="Chen H."/>
            <person name="Shinn P."/>
            <person name="Palm C.J."/>
            <person name="Southwick A.M."/>
            <person name="Wu H.C."/>
            <person name="Kim C.J."/>
            <person name="Nguyen M."/>
            <person name="Pham P.K."/>
            <person name="Cheuk R.F."/>
            <person name="Karlin-Newmann G."/>
            <person name="Liu S.X."/>
            <person name="Lam B."/>
            <person name="Sakano H."/>
            <person name="Wu T."/>
            <person name="Yu G."/>
            <person name="Miranda M."/>
            <person name="Quach H.L."/>
            <person name="Tripp M."/>
            <person name="Chang C.H."/>
            <person name="Lee J.M."/>
            <person name="Toriumi M.J."/>
            <person name="Chan M.M."/>
            <person name="Tang C.C."/>
            <person name="Onodera C.S."/>
            <person name="Deng J.M."/>
            <person name="Akiyama K."/>
            <person name="Ansari Y."/>
            <person name="Arakawa T."/>
            <person name="Banh J."/>
            <person name="Banno F."/>
            <person name="Bowser L."/>
            <person name="Brooks S.Y."/>
            <person name="Carninci P."/>
            <person name="Chao Q."/>
            <person name="Choy N."/>
            <person name="Enju A."/>
            <person name="Goldsmith A.D."/>
            <person name="Gurjal M."/>
            <person name="Hansen N.F."/>
            <person name="Hayashizaki Y."/>
            <person name="Johnson-Hopson C."/>
            <person name="Hsuan V.W."/>
            <person name="Iida K."/>
            <person name="Karnes M."/>
            <person name="Khan S."/>
            <person name="Koesema E."/>
            <person name="Ishida J."/>
            <person name="Jiang P.X."/>
            <person name="Jones T."/>
            <person name="Kawai J."/>
            <person name="Kamiya A."/>
            <person name="Meyers C."/>
            <person name="Nakajima M."/>
            <person name="Narusaka M."/>
            <person name="Seki M."/>
            <person name="Sakurai T."/>
            <person name="Satou M."/>
            <person name="Tamse R."/>
            <person name="Vaysberg M."/>
            <person name="Wallender E.K."/>
            <person name="Wong C."/>
            <person name="Yamamura Y."/>
            <person name="Yuan S."/>
            <person name="Shinozaki K."/>
            <person name="Davis R.W."/>
            <person name="Theologis A."/>
            <person name="Ecker J.R."/>
        </authorList>
    </citation>
    <scope>NUCLEOTIDE SEQUENCE [LARGE SCALE MRNA]</scope>
    <source>
        <strain>cv. Columbia</strain>
    </source>
</reference>
<reference key="4">
    <citation type="journal article" date="2009" name="DNA Res.">
        <title>Analysis of multiple occurrences of alternative splicing events in Arabidopsis thaliana using novel sequenced full-length cDNAs.</title>
        <authorList>
            <person name="Iida K."/>
            <person name="Fukami-Kobayashi K."/>
            <person name="Toyoda A."/>
            <person name="Sakaki Y."/>
            <person name="Kobayashi M."/>
            <person name="Seki M."/>
            <person name="Shinozaki K."/>
        </authorList>
    </citation>
    <scope>NUCLEOTIDE SEQUENCE [LARGE SCALE MRNA]</scope>
    <source>
        <strain>cv. Columbia</strain>
        <tissue>Rosette leaf</tissue>
    </source>
</reference>
<reference key="5">
    <citation type="submission" date="2002-03" db="EMBL/GenBank/DDBJ databases">
        <title>Full-length cDNA from Arabidopsis thaliana.</title>
        <authorList>
            <person name="Brover V.V."/>
            <person name="Troukhan M.E."/>
            <person name="Alexandrov N.A."/>
            <person name="Lu Y.-P."/>
            <person name="Flavell R.B."/>
            <person name="Feldmann K.A."/>
        </authorList>
    </citation>
    <scope>NUCLEOTIDE SEQUENCE [LARGE SCALE MRNA]</scope>
</reference>
<reference key="6">
    <citation type="journal article" date="2010" name="Plant Physiol.">
        <title>Novel bifunctional nucleases, OmBBD and AtBBD1, are involved in abscisic acid-mediated callose deposition in Arabidopsis.</title>
        <authorList>
            <person name="You M.K."/>
            <person name="Shin H.Y."/>
            <person name="Kim Y.J."/>
            <person name="Ok S.H."/>
            <person name="Cho S.K."/>
            <person name="Jeung J.U."/>
            <person name="Yoo S.D."/>
            <person name="Kim J.K."/>
            <person name="Shin J.S."/>
        </authorList>
    </citation>
    <scope>IDENTIFICATION</scope>
</reference>
<organism>
    <name type="scientific">Arabidopsis thaliana</name>
    <name type="common">Mouse-ear cress</name>
    <dbReference type="NCBI Taxonomy" id="3702"/>
    <lineage>
        <taxon>Eukaryota</taxon>
        <taxon>Viridiplantae</taxon>
        <taxon>Streptophyta</taxon>
        <taxon>Embryophyta</taxon>
        <taxon>Tracheophyta</taxon>
        <taxon>Spermatophyta</taxon>
        <taxon>Magnoliopsida</taxon>
        <taxon>eudicotyledons</taxon>
        <taxon>Gunneridae</taxon>
        <taxon>Pentapetalae</taxon>
        <taxon>rosids</taxon>
        <taxon>malvids</taxon>
        <taxon>Brassicales</taxon>
        <taxon>Brassicaceae</taxon>
        <taxon>Camelineae</taxon>
        <taxon>Arabidopsis</taxon>
    </lineage>
</organism>
<keyword id="KW-0378">Hydrolase</keyword>
<keyword id="KW-0540">Nuclease</keyword>
<keyword id="KW-0539">Nucleus</keyword>
<keyword id="KW-1185">Reference proteome</keyword>
<protein>
    <recommendedName>
        <fullName>Bifunctional nuclease 2</fullName>
        <shortName>AtBBD2</shortName>
        <ecNumber>3.1.-.-</ecNumber>
    </recommendedName>
</protein>
<dbReference type="EC" id="3.1.-.-"/>
<dbReference type="EMBL" id="AC024609">
    <property type="protein sequence ID" value="AAF98407.1"/>
    <property type="status" value="ALT_SEQ"/>
    <property type="molecule type" value="Genomic_DNA"/>
</dbReference>
<dbReference type="EMBL" id="CP002684">
    <property type="protein sequence ID" value="AEE29879.1"/>
    <property type="molecule type" value="Genomic_DNA"/>
</dbReference>
<dbReference type="EMBL" id="CP002684">
    <property type="protein sequence ID" value="AEE29880.1"/>
    <property type="molecule type" value="Genomic_DNA"/>
</dbReference>
<dbReference type="EMBL" id="AY035016">
    <property type="protein sequence ID" value="AAK59521.1"/>
    <property type="molecule type" value="mRNA"/>
</dbReference>
<dbReference type="EMBL" id="AY059082">
    <property type="protein sequence ID" value="AAL15188.1"/>
    <property type="molecule type" value="mRNA"/>
</dbReference>
<dbReference type="EMBL" id="AK317508">
    <property type="protein sequence ID" value="BAH20173.1"/>
    <property type="molecule type" value="mRNA"/>
</dbReference>
<dbReference type="EMBL" id="AY088015">
    <property type="protein sequence ID" value="AAM65561.1"/>
    <property type="molecule type" value="mRNA"/>
</dbReference>
<dbReference type="PIR" id="D86329">
    <property type="entry name" value="D86329"/>
</dbReference>
<dbReference type="RefSeq" id="NP_001031068.1">
    <property type="nucleotide sequence ID" value="NM_001035991.1"/>
</dbReference>
<dbReference type="RefSeq" id="NP_001322963.1">
    <property type="nucleotide sequence ID" value="NM_001332402.1"/>
</dbReference>
<dbReference type="RefSeq" id="NP_564093.1">
    <property type="nucleotide sequence ID" value="NM_101822.4"/>
</dbReference>
<dbReference type="SMR" id="Q93VH2"/>
<dbReference type="FunCoup" id="Q93VH2">
    <property type="interactions" value="162"/>
</dbReference>
<dbReference type="STRING" id="3702.Q93VH2"/>
<dbReference type="PaxDb" id="3702-AT1G19660.2"/>
<dbReference type="ProteomicsDB" id="240820"/>
<dbReference type="EnsemblPlants" id="AT1G19660.1">
    <property type="protein sequence ID" value="AT1G19660.1"/>
    <property type="gene ID" value="AT1G19660"/>
</dbReference>
<dbReference type="EnsemblPlants" id="AT1G19660.2">
    <property type="protein sequence ID" value="AT1G19660.2"/>
    <property type="gene ID" value="AT1G19660"/>
</dbReference>
<dbReference type="GeneID" id="838553"/>
<dbReference type="Gramene" id="AT1G19660.1">
    <property type="protein sequence ID" value="AT1G19660.1"/>
    <property type="gene ID" value="AT1G19660"/>
</dbReference>
<dbReference type="Gramene" id="AT1G19660.2">
    <property type="protein sequence ID" value="AT1G19660.2"/>
    <property type="gene ID" value="AT1G19660"/>
</dbReference>
<dbReference type="KEGG" id="ath:AT1G19660"/>
<dbReference type="Araport" id="AT1G19660"/>
<dbReference type="TAIR" id="AT1G19660">
    <property type="gene designation" value="BBD2"/>
</dbReference>
<dbReference type="eggNOG" id="ENOG502QQ9S">
    <property type="taxonomic scope" value="Eukaryota"/>
</dbReference>
<dbReference type="HOGENOM" id="CLU_050306_1_0_1"/>
<dbReference type="InParanoid" id="Q93VH2"/>
<dbReference type="OMA" id="GNMAENF"/>
<dbReference type="OrthoDB" id="566255at2759"/>
<dbReference type="PhylomeDB" id="Q93VH2"/>
<dbReference type="PRO" id="PR:Q93VH2"/>
<dbReference type="Proteomes" id="UP000006548">
    <property type="component" value="Chromosome 1"/>
</dbReference>
<dbReference type="ExpressionAtlas" id="Q93VH2">
    <property type="expression patterns" value="baseline and differential"/>
</dbReference>
<dbReference type="GO" id="GO:0005634">
    <property type="term" value="C:nucleus"/>
    <property type="evidence" value="ECO:0007669"/>
    <property type="project" value="UniProtKB-SubCell"/>
</dbReference>
<dbReference type="GO" id="GO:0004518">
    <property type="term" value="F:nuclease activity"/>
    <property type="evidence" value="ECO:0007669"/>
    <property type="project" value="UniProtKB-KW"/>
</dbReference>
<dbReference type="FunFam" id="3.10.690.10:FF:000002">
    <property type="entry name" value="Bifunctional nuclease 1"/>
    <property type="match status" value="1"/>
</dbReference>
<dbReference type="Gene3D" id="3.10.690.10">
    <property type="entry name" value="Bifunctional nuclease domain"/>
    <property type="match status" value="1"/>
</dbReference>
<dbReference type="InterPro" id="IPR036104">
    <property type="entry name" value="BFN_sf"/>
</dbReference>
<dbReference type="InterPro" id="IPR003729">
    <property type="entry name" value="Bi_nuclease_dom"/>
</dbReference>
<dbReference type="InterPro" id="IPR001943">
    <property type="entry name" value="UVR_dom"/>
</dbReference>
<dbReference type="PANTHER" id="PTHR15160:SF12">
    <property type="entry name" value="BIFUNCTIONAL NUCLEASE 2"/>
    <property type="match status" value="1"/>
</dbReference>
<dbReference type="PANTHER" id="PTHR15160">
    <property type="entry name" value="VON HIPPEL-LINDAU PROTEIN"/>
    <property type="match status" value="1"/>
</dbReference>
<dbReference type="Pfam" id="PF02577">
    <property type="entry name" value="BFN_dom"/>
    <property type="match status" value="1"/>
</dbReference>
<dbReference type="Pfam" id="PF02151">
    <property type="entry name" value="UVR"/>
    <property type="match status" value="1"/>
</dbReference>
<dbReference type="SUPFAM" id="SSF103256">
    <property type="entry name" value="Hypothetical protein TM0160"/>
    <property type="match status" value="1"/>
</dbReference>
<dbReference type="PROSITE" id="PS51658">
    <property type="entry name" value="BFN"/>
    <property type="match status" value="1"/>
</dbReference>